<protein>
    <recommendedName>
        <fullName>Glycoprotein hormones alpha chain</fullName>
    </recommendedName>
    <alternativeName>
        <fullName>GTH-alpha</fullName>
    </alternativeName>
    <alternativeName>
        <fullName>Gonadotropin alpha chain</fullName>
    </alternativeName>
</protein>
<name>GLHA_CLAGA</name>
<feature type="signal peptide" evidence="1">
    <location>
        <begin position="1"/>
        <end position="24"/>
    </location>
</feature>
<feature type="chain" id="PRO_0000011661" description="Glycoprotein hormones alpha chain">
    <location>
        <begin position="25"/>
        <end position="116"/>
    </location>
</feature>
<feature type="glycosylation site" description="N-linked (GlcNAc...) asparagine" evidence="2">
    <location>
        <position position="77"/>
    </location>
</feature>
<feature type="glycosylation site" description="N-linked (GlcNAc...) asparagine" evidence="2">
    <location>
        <position position="102"/>
    </location>
</feature>
<feature type="disulfide bond" evidence="2">
    <location>
        <begin position="32"/>
        <end position="56"/>
    </location>
</feature>
<feature type="disulfide bond" evidence="2">
    <location>
        <begin position="35"/>
        <end position="85"/>
    </location>
</feature>
<feature type="disulfide bond" evidence="2">
    <location>
        <begin position="53"/>
        <end position="106"/>
    </location>
</feature>
<feature type="disulfide bond" evidence="2">
    <location>
        <begin position="57"/>
        <end position="108"/>
    </location>
</feature>
<feature type="disulfide bond" evidence="2">
    <location>
        <begin position="84"/>
        <end position="111"/>
    </location>
</feature>
<keyword id="KW-1015">Disulfide bond</keyword>
<keyword id="KW-0325">Glycoprotein</keyword>
<keyword id="KW-0372">Hormone</keyword>
<keyword id="KW-0964">Secreted</keyword>
<keyword id="KW-0732">Signal</keyword>
<proteinExistence type="inferred from homology"/>
<sequence>MTLIPKYTGATILLLCVLIEIGQLYPNNDFGCEECKLKENNIFSKPGAPVYQCMGCCFSRAYPTPLRSKKTMLVPKNITSEATCCVAKEVKRVIVNDVKLVNHTDCHCSTCYYHKF</sequence>
<organism>
    <name type="scientific">Clarias gariepinus</name>
    <name type="common">North African catfish</name>
    <name type="synonym">Silurus gariepinus</name>
    <dbReference type="NCBI Taxonomy" id="13013"/>
    <lineage>
        <taxon>Eukaryota</taxon>
        <taxon>Metazoa</taxon>
        <taxon>Chordata</taxon>
        <taxon>Craniata</taxon>
        <taxon>Vertebrata</taxon>
        <taxon>Euteleostomi</taxon>
        <taxon>Actinopterygii</taxon>
        <taxon>Neopterygii</taxon>
        <taxon>Teleostei</taxon>
        <taxon>Ostariophysi</taxon>
        <taxon>Siluriformes</taxon>
        <taxon>Clariidae</taxon>
        <taxon>Clarias</taxon>
    </lineage>
</organism>
<accession>P53542</accession>
<dbReference type="EMBL" id="X97760">
    <property type="protein sequence ID" value="CAA66358.1"/>
    <property type="molecule type" value="mRNA"/>
</dbReference>
<dbReference type="RefSeq" id="XP_053365962.1">
    <property type="nucleotide sequence ID" value="XM_053509987.1"/>
</dbReference>
<dbReference type="SMR" id="P53542"/>
<dbReference type="GlyCosmos" id="P53542">
    <property type="glycosylation" value="2 sites, No reported glycans"/>
</dbReference>
<dbReference type="GeneID" id="128535897"/>
<dbReference type="GO" id="GO:0005615">
    <property type="term" value="C:extracellular space"/>
    <property type="evidence" value="ECO:0000250"/>
    <property type="project" value="UniProtKB"/>
</dbReference>
<dbReference type="GO" id="GO:0016914">
    <property type="term" value="C:follicle-stimulating hormone complex"/>
    <property type="evidence" value="ECO:0000250"/>
    <property type="project" value="UniProtKB"/>
</dbReference>
<dbReference type="GO" id="GO:0016913">
    <property type="term" value="F:follicle-stimulating hormone activity"/>
    <property type="evidence" value="ECO:0000250"/>
    <property type="project" value="UniProtKB"/>
</dbReference>
<dbReference type="GO" id="GO:0046982">
    <property type="term" value="F:protein heterodimerization activity"/>
    <property type="evidence" value="ECO:0000250"/>
    <property type="project" value="UniProtKB"/>
</dbReference>
<dbReference type="GO" id="GO:0007186">
    <property type="term" value="P:G protein-coupled receptor signaling pathway"/>
    <property type="evidence" value="ECO:0000250"/>
    <property type="project" value="UniProtKB"/>
</dbReference>
<dbReference type="GO" id="GO:0010893">
    <property type="term" value="P:positive regulation of steroid biosynthetic process"/>
    <property type="evidence" value="ECO:0000250"/>
    <property type="project" value="UniProtKB"/>
</dbReference>
<dbReference type="GO" id="GO:0010469">
    <property type="term" value="P:regulation of signaling receptor activity"/>
    <property type="evidence" value="ECO:0000250"/>
    <property type="project" value="UniProtKB"/>
</dbReference>
<dbReference type="GO" id="GO:0006590">
    <property type="term" value="P:thyroid hormone generation"/>
    <property type="evidence" value="ECO:0007669"/>
    <property type="project" value="TreeGrafter"/>
</dbReference>
<dbReference type="FunFam" id="2.10.90.10:FF:000011">
    <property type="entry name" value="Glycoprotein hormones alpha chain"/>
    <property type="match status" value="1"/>
</dbReference>
<dbReference type="Gene3D" id="2.10.90.10">
    <property type="entry name" value="Cystine-knot cytokines"/>
    <property type="match status" value="1"/>
</dbReference>
<dbReference type="InterPro" id="IPR029034">
    <property type="entry name" value="Cystine-knot_cytokine"/>
</dbReference>
<dbReference type="InterPro" id="IPR000476">
    <property type="entry name" value="Glyco_hormone"/>
</dbReference>
<dbReference type="PANTHER" id="PTHR11509">
    <property type="entry name" value="GLYCOPROTEIN HORMONE ALPHA CHAIN"/>
    <property type="match status" value="1"/>
</dbReference>
<dbReference type="PANTHER" id="PTHR11509:SF0">
    <property type="entry name" value="GLYCOPROTEIN HORMONES ALPHA CHAIN"/>
    <property type="match status" value="1"/>
</dbReference>
<dbReference type="Pfam" id="PF00236">
    <property type="entry name" value="Hormone_6"/>
    <property type="match status" value="1"/>
</dbReference>
<dbReference type="PRINTS" id="PR00274">
    <property type="entry name" value="GLYCOHORMONE"/>
</dbReference>
<dbReference type="SMART" id="SM00067">
    <property type="entry name" value="GHA"/>
    <property type="match status" value="1"/>
</dbReference>
<dbReference type="SUPFAM" id="SSF57501">
    <property type="entry name" value="Cystine-knot cytokines"/>
    <property type="match status" value="1"/>
</dbReference>
<dbReference type="PROSITE" id="PS00779">
    <property type="entry name" value="GLYCO_HORMONE_ALPHA_1"/>
    <property type="match status" value="1"/>
</dbReference>
<dbReference type="PROSITE" id="PS00780">
    <property type="entry name" value="GLYCO_HORMONE_ALPHA_2"/>
    <property type="match status" value="1"/>
</dbReference>
<dbReference type="PROSITE" id="PS50277">
    <property type="entry name" value="GLYCO_HORMONE_ALPHA_3"/>
    <property type="match status" value="1"/>
</dbReference>
<reference key="1">
    <citation type="submission" date="1996-05" db="EMBL/GenBank/DDBJ databases">
        <authorList>
            <person name="Rebers F.E.M."/>
            <person name="Tensen C.P."/>
            <person name="Schulz R.W."/>
            <person name="Goos H.J.T."/>
            <person name="Bogerd J."/>
        </authorList>
    </citation>
    <scope>NUCLEOTIDE SEQUENCE [MRNA]</scope>
    <source>
        <tissue>Pituitary</tissue>
    </source>
</reference>
<evidence type="ECO:0000250" key="1"/>
<evidence type="ECO:0000250" key="2">
    <source>
        <dbReference type="UniProtKB" id="P01215"/>
    </source>
</evidence>
<evidence type="ECO:0000250" key="3">
    <source>
        <dbReference type="UniProtKB" id="P37204"/>
    </source>
</evidence>
<evidence type="ECO:0000305" key="4"/>
<comment type="function">
    <text evidence="3">Shared alpha chain of heterodimeric glycoprotein hormones. These hormones bind specific receptors on target cells that in turn activate downstream signaling pathways. Involved in gametogenesis and steroidogenesis.</text>
</comment>
<comment type="subunit">
    <text evidence="3">Heterodimer. Glycoprotein hormones are heterodimers composed of a common alpha chain described here and a unique beta chain which confers their biological specificity to the different hormones.</text>
</comment>
<comment type="subcellular location">
    <subcellularLocation>
        <location evidence="3">Secreted</location>
    </subcellularLocation>
</comment>
<comment type="similarity">
    <text evidence="4">Belongs to the glycoprotein hormones subunit alpha family.</text>
</comment>
<gene>
    <name type="primary">cga</name>
</gene>